<keyword id="KW-0963">Cytoplasm</keyword>
<keyword id="KW-0251">Elongation factor</keyword>
<keyword id="KW-0648">Protein biosynthesis</keyword>
<proteinExistence type="inferred from homology"/>
<comment type="function">
    <text>Associates with the EF-Tu.GDP complex and induces the exchange of GDP to GTP. It remains bound to the aminoacyl-tRNA.EF-Tu.GTP complex up to the GTP hydrolysis stage on the ribosome.</text>
</comment>
<comment type="subcellular location">
    <subcellularLocation>
        <location>Cytoplasm</location>
    </subcellularLocation>
</comment>
<comment type="similarity">
    <text evidence="2">Belongs to the EF-Ts family.</text>
</comment>
<evidence type="ECO:0000250" key="1"/>
<evidence type="ECO:0000305" key="2"/>
<dbReference type="EMBL" id="U60196">
    <property type="protein sequence ID" value="AAB07070.1"/>
    <property type="molecule type" value="Genomic_DNA"/>
</dbReference>
<dbReference type="EMBL" id="AE002160">
    <property type="protein sequence ID" value="AAF38939.1"/>
    <property type="molecule type" value="Genomic_DNA"/>
</dbReference>
<dbReference type="PIR" id="A81747">
    <property type="entry name" value="A81747"/>
</dbReference>
<dbReference type="RefSeq" id="WP_010229226.1">
    <property type="nucleotide sequence ID" value="NZ_CP063055.1"/>
</dbReference>
<dbReference type="SMR" id="P71146"/>
<dbReference type="GeneID" id="1245578"/>
<dbReference type="KEGG" id="cmu:TC_0050"/>
<dbReference type="eggNOG" id="COG0264">
    <property type="taxonomic scope" value="Bacteria"/>
</dbReference>
<dbReference type="HOGENOM" id="CLU_047155_0_0_0"/>
<dbReference type="OrthoDB" id="9808348at2"/>
<dbReference type="Proteomes" id="UP000000800">
    <property type="component" value="Chromosome"/>
</dbReference>
<dbReference type="GO" id="GO:0005737">
    <property type="term" value="C:cytoplasm"/>
    <property type="evidence" value="ECO:0007669"/>
    <property type="project" value="UniProtKB-SubCell"/>
</dbReference>
<dbReference type="GO" id="GO:0003746">
    <property type="term" value="F:translation elongation factor activity"/>
    <property type="evidence" value="ECO:0007669"/>
    <property type="project" value="UniProtKB-UniRule"/>
</dbReference>
<dbReference type="CDD" id="cd14275">
    <property type="entry name" value="UBA_EF-Ts"/>
    <property type="match status" value="1"/>
</dbReference>
<dbReference type="FunFam" id="1.10.286.20:FF:000001">
    <property type="entry name" value="Elongation factor Ts"/>
    <property type="match status" value="1"/>
</dbReference>
<dbReference type="FunFam" id="1.10.8.10:FF:000001">
    <property type="entry name" value="Elongation factor Ts"/>
    <property type="match status" value="1"/>
</dbReference>
<dbReference type="Gene3D" id="1.10.286.20">
    <property type="match status" value="1"/>
</dbReference>
<dbReference type="Gene3D" id="1.10.8.10">
    <property type="entry name" value="DNA helicase RuvA subunit, C-terminal domain"/>
    <property type="match status" value="1"/>
</dbReference>
<dbReference type="Gene3D" id="3.30.479.20">
    <property type="entry name" value="Elongation factor Ts, dimerisation domain"/>
    <property type="match status" value="2"/>
</dbReference>
<dbReference type="HAMAP" id="MF_00050">
    <property type="entry name" value="EF_Ts"/>
    <property type="match status" value="1"/>
</dbReference>
<dbReference type="InterPro" id="IPR036402">
    <property type="entry name" value="EF-Ts_dimer_sf"/>
</dbReference>
<dbReference type="InterPro" id="IPR001816">
    <property type="entry name" value="Transl_elong_EFTs/EF1B"/>
</dbReference>
<dbReference type="InterPro" id="IPR014039">
    <property type="entry name" value="Transl_elong_EFTs/EF1B_dimer"/>
</dbReference>
<dbReference type="InterPro" id="IPR018101">
    <property type="entry name" value="Transl_elong_Ts_CS"/>
</dbReference>
<dbReference type="InterPro" id="IPR009060">
    <property type="entry name" value="UBA-like_sf"/>
</dbReference>
<dbReference type="NCBIfam" id="TIGR00116">
    <property type="entry name" value="tsf"/>
    <property type="match status" value="1"/>
</dbReference>
<dbReference type="PANTHER" id="PTHR11741">
    <property type="entry name" value="ELONGATION FACTOR TS"/>
    <property type="match status" value="1"/>
</dbReference>
<dbReference type="PANTHER" id="PTHR11741:SF0">
    <property type="entry name" value="ELONGATION FACTOR TS, MITOCHONDRIAL"/>
    <property type="match status" value="1"/>
</dbReference>
<dbReference type="Pfam" id="PF00889">
    <property type="entry name" value="EF_TS"/>
    <property type="match status" value="1"/>
</dbReference>
<dbReference type="SUPFAM" id="SSF54713">
    <property type="entry name" value="Elongation factor Ts (EF-Ts), dimerisation domain"/>
    <property type="match status" value="1"/>
</dbReference>
<dbReference type="SUPFAM" id="SSF46934">
    <property type="entry name" value="UBA-like"/>
    <property type="match status" value="1"/>
</dbReference>
<dbReference type="PROSITE" id="PS01126">
    <property type="entry name" value="EF_TS_1"/>
    <property type="match status" value="1"/>
</dbReference>
<dbReference type="PROSITE" id="PS01127">
    <property type="entry name" value="EF_TS_2"/>
    <property type="match status" value="1"/>
</dbReference>
<protein>
    <recommendedName>
        <fullName>Elongation factor Ts</fullName>
        <shortName>EF-Ts</shortName>
    </recommendedName>
</protein>
<organism>
    <name type="scientific">Chlamydia muridarum (strain MoPn / Nigg)</name>
    <dbReference type="NCBI Taxonomy" id="243161"/>
    <lineage>
        <taxon>Bacteria</taxon>
        <taxon>Pseudomonadati</taxon>
        <taxon>Chlamydiota</taxon>
        <taxon>Chlamydiia</taxon>
        <taxon>Chlamydiales</taxon>
        <taxon>Chlamydiaceae</taxon>
        <taxon>Chlamydia/Chlamydophila group</taxon>
        <taxon>Chlamydia</taxon>
    </lineage>
</organism>
<sequence length="282" mass="30824">MSDFSMETLKSLRQRTGVGLTKCKEALEHAKGNLEDAVVYLRKLGLASAGKKEHRETKEGVIAASVDEHGAAIVEVNVETDFVANNSVFRTFVTGLLSDILNNKLSDVDALAQVTSSQEPSLSVEELKAVTMQTVGENIRISRALYTPVNSNQSVGIYSHGNGKAVALVFLSGSDKQEALAKDIAMHIVASQPQFLSKESVPQEVLEREREVFSSQLSGKPQEVIEKITTGKFKAFFQETCLLEQAFIKDPDVTIQELVDRAAKASGEPLKVEHFVFWKIGA</sequence>
<feature type="chain" id="PRO_0000161102" description="Elongation factor Ts">
    <location>
        <begin position="1"/>
        <end position="282"/>
    </location>
</feature>
<feature type="region of interest" description="Involved in Mg(2+) ion dislocation from EF-Tu" evidence="1">
    <location>
        <begin position="80"/>
        <end position="83"/>
    </location>
</feature>
<gene>
    <name type="primary">tsf</name>
    <name type="ordered locus">TC_0050</name>
</gene>
<reference key="1">
    <citation type="journal article" date="1997" name="Arch. Biochem. Biophys.">
        <title>Elongation factor Ts of Chlamydia trachomatis: structure of the gene and properties of the protein.</title>
        <authorList>
            <person name="Zhang Y.X."/>
            <person name="Tao J."/>
            <person name="Zhou M."/>
            <person name="Meng Q."/>
            <person name="Zhang L."/>
            <person name="Shen L."/>
            <person name="Klein R."/>
            <person name="Miller D.L."/>
        </authorList>
    </citation>
    <scope>NUCLEOTIDE SEQUENCE [GENOMIC DNA]</scope>
    <source>
        <strain>MoPn</strain>
    </source>
</reference>
<reference key="2">
    <citation type="journal article" date="2000" name="Nucleic Acids Res.">
        <title>Genome sequences of Chlamydia trachomatis MoPn and Chlamydia pneumoniae AR39.</title>
        <authorList>
            <person name="Read T.D."/>
            <person name="Brunham R.C."/>
            <person name="Shen C."/>
            <person name="Gill S.R."/>
            <person name="Heidelberg J.F."/>
            <person name="White O."/>
            <person name="Hickey E.K."/>
            <person name="Peterson J.D."/>
            <person name="Utterback T.R."/>
            <person name="Berry K.J."/>
            <person name="Bass S."/>
            <person name="Linher K.D."/>
            <person name="Weidman J.F."/>
            <person name="Khouri H.M."/>
            <person name="Craven B."/>
            <person name="Bowman C."/>
            <person name="Dodson R.J."/>
            <person name="Gwinn M.L."/>
            <person name="Nelson W.C."/>
            <person name="DeBoy R.T."/>
            <person name="Kolonay J.F."/>
            <person name="McClarty G."/>
            <person name="Salzberg S.L."/>
            <person name="Eisen J.A."/>
            <person name="Fraser C.M."/>
        </authorList>
    </citation>
    <scope>NUCLEOTIDE SEQUENCE [LARGE SCALE GENOMIC DNA]</scope>
    <source>
        <strain>MoPn / Nigg</strain>
    </source>
</reference>
<name>EFTS_CHLMU</name>
<accession>P71146</accession>